<name>NUOH_PSEPW</name>
<organism>
    <name type="scientific">Pseudomonas putida (strain W619)</name>
    <dbReference type="NCBI Taxonomy" id="390235"/>
    <lineage>
        <taxon>Bacteria</taxon>
        <taxon>Pseudomonadati</taxon>
        <taxon>Pseudomonadota</taxon>
        <taxon>Gammaproteobacteria</taxon>
        <taxon>Pseudomonadales</taxon>
        <taxon>Pseudomonadaceae</taxon>
        <taxon>Pseudomonas</taxon>
    </lineage>
</organism>
<accession>B1J6M8</accession>
<keyword id="KW-0997">Cell inner membrane</keyword>
<keyword id="KW-1003">Cell membrane</keyword>
<keyword id="KW-0472">Membrane</keyword>
<keyword id="KW-0520">NAD</keyword>
<keyword id="KW-0874">Quinone</keyword>
<keyword id="KW-1278">Translocase</keyword>
<keyword id="KW-0812">Transmembrane</keyword>
<keyword id="KW-1133">Transmembrane helix</keyword>
<keyword id="KW-0830">Ubiquinone</keyword>
<reference key="1">
    <citation type="submission" date="2008-02" db="EMBL/GenBank/DDBJ databases">
        <title>Complete sequence of Pseudomonas putida W619.</title>
        <authorList>
            <person name="Copeland A."/>
            <person name="Lucas S."/>
            <person name="Lapidus A."/>
            <person name="Barry K."/>
            <person name="Detter J.C."/>
            <person name="Glavina del Rio T."/>
            <person name="Dalin E."/>
            <person name="Tice H."/>
            <person name="Pitluck S."/>
            <person name="Chain P."/>
            <person name="Malfatti S."/>
            <person name="Shin M."/>
            <person name="Vergez L."/>
            <person name="Schmutz J."/>
            <person name="Larimer F."/>
            <person name="Land M."/>
            <person name="Hauser L."/>
            <person name="Kyrpides N."/>
            <person name="Kim E."/>
            <person name="Taghavi S."/>
            <person name="Vangronsveld D."/>
            <person name="van der Lelie D."/>
            <person name="Richardson P."/>
        </authorList>
    </citation>
    <scope>NUCLEOTIDE SEQUENCE [LARGE SCALE GENOMIC DNA]</scope>
    <source>
        <strain>W619</strain>
    </source>
</reference>
<sequence length="335" mass="37567">MSWFTPEVIDVIIQVVKAIVVLLAVVVCGALLSFVERRLLGWWQDRYGPNRVGPFGMFQIAADMLKMFFKEDWNPPFVDKMIFTLAPVVAMSALLIGFSIIPITPGWGVADLNIGLLFFFAMAGLSVYAVLFAGWSSNNKYALLGSLRASAQTVSYEVFLGLALMGVVVQVGSFNMRDIVEYQAQNLWFIIPQFFGFCTFFIAGVAVTHRHPFDQPEAEQELADGYHIEYAGMKWGMFFVGEYIGIILISALLVTLFFGGWHGPFGILPQVPFLWFALKTAFFIMLFILLRASIPRPRYDQVMDFSWKFCLPLTLINLLVTAAIVLYNTPAVAAQ</sequence>
<protein>
    <recommendedName>
        <fullName evidence="1">NADH-quinone oxidoreductase subunit H</fullName>
        <ecNumber evidence="1">7.1.1.-</ecNumber>
    </recommendedName>
    <alternativeName>
        <fullName evidence="1">NADH dehydrogenase I subunit H</fullName>
    </alternativeName>
    <alternativeName>
        <fullName evidence="1">NDH-1 subunit H</fullName>
    </alternativeName>
</protein>
<proteinExistence type="inferred from homology"/>
<evidence type="ECO:0000255" key="1">
    <source>
        <dbReference type="HAMAP-Rule" id="MF_01350"/>
    </source>
</evidence>
<gene>
    <name evidence="1" type="primary">nuoH</name>
    <name type="ordered locus">PputW619_1867</name>
</gene>
<feature type="chain" id="PRO_1000143613" description="NADH-quinone oxidoreductase subunit H">
    <location>
        <begin position="1"/>
        <end position="335"/>
    </location>
</feature>
<feature type="transmembrane region" description="Helical" evidence="1">
    <location>
        <begin position="15"/>
        <end position="35"/>
    </location>
</feature>
<feature type="transmembrane region" description="Helical" evidence="1">
    <location>
        <begin position="81"/>
        <end position="101"/>
    </location>
</feature>
<feature type="transmembrane region" description="Helical" evidence="1">
    <location>
        <begin position="114"/>
        <end position="134"/>
    </location>
</feature>
<feature type="transmembrane region" description="Helical" evidence="1">
    <location>
        <begin position="154"/>
        <end position="174"/>
    </location>
</feature>
<feature type="transmembrane region" description="Helical" evidence="1">
    <location>
        <begin position="187"/>
        <end position="207"/>
    </location>
</feature>
<feature type="transmembrane region" description="Helical" evidence="1">
    <location>
        <begin position="238"/>
        <end position="258"/>
    </location>
</feature>
<feature type="transmembrane region" description="Helical" evidence="1">
    <location>
        <begin position="270"/>
        <end position="290"/>
    </location>
</feature>
<feature type="transmembrane region" description="Helical" evidence="1">
    <location>
        <begin position="307"/>
        <end position="327"/>
    </location>
</feature>
<dbReference type="EC" id="7.1.1.-" evidence="1"/>
<dbReference type="EMBL" id="CP000949">
    <property type="protein sequence ID" value="ACA72370.1"/>
    <property type="molecule type" value="Genomic_DNA"/>
</dbReference>
<dbReference type="SMR" id="B1J6M8"/>
<dbReference type="STRING" id="390235.PputW619_1867"/>
<dbReference type="KEGG" id="ppw:PputW619_1867"/>
<dbReference type="eggNOG" id="COG1005">
    <property type="taxonomic scope" value="Bacteria"/>
</dbReference>
<dbReference type="HOGENOM" id="CLU_015134_0_1_6"/>
<dbReference type="OrthoDB" id="9803734at2"/>
<dbReference type="GO" id="GO:0005886">
    <property type="term" value="C:plasma membrane"/>
    <property type="evidence" value="ECO:0007669"/>
    <property type="project" value="UniProtKB-SubCell"/>
</dbReference>
<dbReference type="GO" id="GO:0003954">
    <property type="term" value="F:NADH dehydrogenase activity"/>
    <property type="evidence" value="ECO:0007669"/>
    <property type="project" value="TreeGrafter"/>
</dbReference>
<dbReference type="GO" id="GO:0016655">
    <property type="term" value="F:oxidoreductase activity, acting on NAD(P)H, quinone or similar compound as acceptor"/>
    <property type="evidence" value="ECO:0007669"/>
    <property type="project" value="UniProtKB-UniRule"/>
</dbReference>
<dbReference type="GO" id="GO:0048038">
    <property type="term" value="F:quinone binding"/>
    <property type="evidence" value="ECO:0007669"/>
    <property type="project" value="UniProtKB-KW"/>
</dbReference>
<dbReference type="GO" id="GO:0009060">
    <property type="term" value="P:aerobic respiration"/>
    <property type="evidence" value="ECO:0007669"/>
    <property type="project" value="TreeGrafter"/>
</dbReference>
<dbReference type="HAMAP" id="MF_01350">
    <property type="entry name" value="NDH1_NuoH"/>
    <property type="match status" value="1"/>
</dbReference>
<dbReference type="InterPro" id="IPR001694">
    <property type="entry name" value="NADH_UbQ_OxRdtase_su1/FPO"/>
</dbReference>
<dbReference type="InterPro" id="IPR018086">
    <property type="entry name" value="NADH_UbQ_OxRdtase_su1_CS"/>
</dbReference>
<dbReference type="NCBIfam" id="NF004740">
    <property type="entry name" value="PRK06076.1-1"/>
    <property type="match status" value="1"/>
</dbReference>
<dbReference type="NCBIfam" id="NF004741">
    <property type="entry name" value="PRK06076.1-2"/>
    <property type="match status" value="1"/>
</dbReference>
<dbReference type="PANTHER" id="PTHR11432">
    <property type="entry name" value="NADH DEHYDROGENASE SUBUNIT 1"/>
    <property type="match status" value="1"/>
</dbReference>
<dbReference type="PANTHER" id="PTHR11432:SF3">
    <property type="entry name" value="NADH-UBIQUINONE OXIDOREDUCTASE CHAIN 1"/>
    <property type="match status" value="1"/>
</dbReference>
<dbReference type="Pfam" id="PF00146">
    <property type="entry name" value="NADHdh"/>
    <property type="match status" value="1"/>
</dbReference>
<dbReference type="PROSITE" id="PS00667">
    <property type="entry name" value="COMPLEX1_ND1_1"/>
    <property type="match status" value="1"/>
</dbReference>
<dbReference type="PROSITE" id="PS00668">
    <property type="entry name" value="COMPLEX1_ND1_2"/>
    <property type="match status" value="1"/>
</dbReference>
<comment type="function">
    <text evidence="1">NDH-1 shuttles electrons from NADH, via FMN and iron-sulfur (Fe-S) centers, to quinones in the respiratory chain. The immediate electron acceptor for the enzyme in this species is believed to be ubiquinone. Couples the redox reaction to proton translocation (for every two electrons transferred, four hydrogen ions are translocated across the cytoplasmic membrane), and thus conserves the redox energy in a proton gradient. This subunit may bind ubiquinone.</text>
</comment>
<comment type="catalytic activity">
    <reaction evidence="1">
        <text>a quinone + NADH + 5 H(+)(in) = a quinol + NAD(+) + 4 H(+)(out)</text>
        <dbReference type="Rhea" id="RHEA:57888"/>
        <dbReference type="ChEBI" id="CHEBI:15378"/>
        <dbReference type="ChEBI" id="CHEBI:24646"/>
        <dbReference type="ChEBI" id="CHEBI:57540"/>
        <dbReference type="ChEBI" id="CHEBI:57945"/>
        <dbReference type="ChEBI" id="CHEBI:132124"/>
    </reaction>
</comment>
<comment type="subunit">
    <text evidence="1">NDH-1 is composed of 13 different subunits. Subunits NuoA, H, J, K, L, M, N constitute the membrane sector of the complex.</text>
</comment>
<comment type="subcellular location">
    <subcellularLocation>
        <location evidence="1">Cell inner membrane</location>
        <topology evidence="1">Multi-pass membrane protein</topology>
    </subcellularLocation>
</comment>
<comment type="similarity">
    <text evidence="1">Belongs to the complex I subunit 1 family.</text>
</comment>